<organism>
    <name type="scientific">Staphylococcus aureus (strain MW2)</name>
    <dbReference type="NCBI Taxonomy" id="196620"/>
    <lineage>
        <taxon>Bacteria</taxon>
        <taxon>Bacillati</taxon>
        <taxon>Bacillota</taxon>
        <taxon>Bacilli</taxon>
        <taxon>Bacillales</taxon>
        <taxon>Staphylococcaceae</taxon>
        <taxon>Staphylococcus</taxon>
    </lineage>
</organism>
<dbReference type="EC" id="2.5.1.140" evidence="1"/>
<dbReference type="EMBL" id="BA000033">
    <property type="protein sequence ID" value="BAB93954.1"/>
    <property type="molecule type" value="Genomic_DNA"/>
</dbReference>
<dbReference type="RefSeq" id="WP_000570808.1">
    <property type="nucleotide sequence ID" value="NC_003923.1"/>
</dbReference>
<dbReference type="SMR" id="Q7A1Z6"/>
<dbReference type="KEGG" id="sam:MW0089"/>
<dbReference type="HOGENOM" id="CLU_021018_1_0_9"/>
<dbReference type="GO" id="GO:0016765">
    <property type="term" value="F:transferase activity, transferring alkyl or aryl (other than methyl) groups"/>
    <property type="evidence" value="ECO:0007669"/>
    <property type="project" value="UniProtKB-ARBA"/>
</dbReference>
<dbReference type="GO" id="GO:0006535">
    <property type="term" value="P:cysteine biosynthetic process from serine"/>
    <property type="evidence" value="ECO:0007669"/>
    <property type="project" value="InterPro"/>
</dbReference>
<dbReference type="CDD" id="cd01561">
    <property type="entry name" value="CBS_like"/>
    <property type="match status" value="1"/>
</dbReference>
<dbReference type="Gene3D" id="3.40.50.1100">
    <property type="match status" value="2"/>
</dbReference>
<dbReference type="InterPro" id="IPR050214">
    <property type="entry name" value="Cys_Synth/Cystath_Beta-Synth"/>
</dbReference>
<dbReference type="InterPro" id="IPR001216">
    <property type="entry name" value="P-phosphate_BS"/>
</dbReference>
<dbReference type="InterPro" id="IPR023927">
    <property type="entry name" value="SbnA"/>
</dbReference>
<dbReference type="InterPro" id="IPR001926">
    <property type="entry name" value="TrpB-like_PALP"/>
</dbReference>
<dbReference type="InterPro" id="IPR036052">
    <property type="entry name" value="TrpB-like_PALP_sf"/>
</dbReference>
<dbReference type="NCBIfam" id="TIGR03945">
    <property type="entry name" value="PLP_SbnA_fam"/>
    <property type="match status" value="1"/>
</dbReference>
<dbReference type="PANTHER" id="PTHR10314">
    <property type="entry name" value="CYSTATHIONINE BETA-SYNTHASE"/>
    <property type="match status" value="1"/>
</dbReference>
<dbReference type="Pfam" id="PF00291">
    <property type="entry name" value="PALP"/>
    <property type="match status" value="1"/>
</dbReference>
<dbReference type="SUPFAM" id="SSF53686">
    <property type="entry name" value="Tryptophan synthase beta subunit-like PLP-dependent enzymes"/>
    <property type="match status" value="1"/>
</dbReference>
<dbReference type="PROSITE" id="PS00901">
    <property type="entry name" value="CYS_SYNTHASE"/>
    <property type="match status" value="1"/>
</dbReference>
<comment type="function">
    <text evidence="1">Catalyzes the synthesis of N-((2S)-2-amino-2-carboxyethyl)-L-glutamate (ACEGA) from O-phospho-L-serine and L-glutamate. Involved in the biosynthesis of L-2,3-diaminopropionic acid (L-Dap), a precursor of staphyloferrin B and antibiotics.</text>
</comment>
<comment type="catalytic activity">
    <reaction evidence="1">
        <text>O-phospho-L-serine + L-glutamate = N-[(2S)-2-amino-2-carboxyethyl]-L-glutamate + phosphate + H(+)</text>
        <dbReference type="Rhea" id="RHEA:52384"/>
        <dbReference type="ChEBI" id="CHEBI:15378"/>
        <dbReference type="ChEBI" id="CHEBI:29985"/>
        <dbReference type="ChEBI" id="CHEBI:43474"/>
        <dbReference type="ChEBI" id="CHEBI:57524"/>
        <dbReference type="ChEBI" id="CHEBI:134610"/>
        <dbReference type="EC" id="2.5.1.140"/>
    </reaction>
</comment>
<comment type="cofactor">
    <cofactor evidence="1">
        <name>pyridoxal 5'-phosphate</name>
        <dbReference type="ChEBI" id="CHEBI:597326"/>
    </cofactor>
</comment>
<comment type="pathway">
    <text evidence="1">Siderophore biosynthesis.</text>
</comment>
<comment type="subunit">
    <text evidence="1">Homodimer.</text>
</comment>
<comment type="induction">
    <text evidence="2">Up-regulated under iron-deficient growth conditions. Repressed by Fur under iron-rich growth conditions.</text>
</comment>
<comment type="similarity">
    <text evidence="3">Belongs to the cysteine synthase/cystathionine beta-synthase family. SbnA subfamily.</text>
</comment>
<keyword id="KW-0663">Pyridoxal phosphate</keyword>
<keyword id="KW-0808">Transferase</keyword>
<gene>
    <name type="primary">sbnA</name>
    <name type="ordered locus">MW0089</name>
</gene>
<feature type="chain" id="PRO_0000395021" description="N-(2-amino-2-carboxyethyl)-L-glutamate synthase">
    <location>
        <begin position="1"/>
        <end position="326"/>
    </location>
</feature>
<feature type="binding site" evidence="1">
    <location>
        <position position="77"/>
    </location>
    <ligand>
        <name>pyridoxal 5'-phosphate</name>
        <dbReference type="ChEBI" id="CHEBI:597326"/>
    </ligand>
</feature>
<feature type="binding site" evidence="1">
    <location>
        <begin position="185"/>
        <end position="189"/>
    </location>
    <ligand>
        <name>pyridoxal 5'-phosphate</name>
        <dbReference type="ChEBI" id="CHEBI:597326"/>
    </ligand>
</feature>
<feature type="binding site" evidence="1">
    <location>
        <position position="272"/>
    </location>
    <ligand>
        <name>pyridoxal 5'-phosphate</name>
        <dbReference type="ChEBI" id="CHEBI:597326"/>
    </ligand>
</feature>
<feature type="modified residue" description="N6-(pyridoxal phosphate)lysine" evidence="1">
    <location>
        <position position="47"/>
    </location>
</feature>
<evidence type="ECO:0000250" key="1">
    <source>
        <dbReference type="UniProtKB" id="A6QDA0"/>
    </source>
</evidence>
<evidence type="ECO:0000250" key="2">
    <source>
        <dbReference type="UniProtKB" id="Q2G1N3"/>
    </source>
</evidence>
<evidence type="ECO:0000305" key="3"/>
<accession>Q7A1Z6</accession>
<reference key="1">
    <citation type="journal article" date="2002" name="Lancet">
        <title>Genome and virulence determinants of high virulence community-acquired MRSA.</title>
        <authorList>
            <person name="Baba T."/>
            <person name="Takeuchi F."/>
            <person name="Kuroda M."/>
            <person name="Yuzawa H."/>
            <person name="Aoki K."/>
            <person name="Oguchi A."/>
            <person name="Nagai Y."/>
            <person name="Iwama N."/>
            <person name="Asano K."/>
            <person name="Naimi T."/>
            <person name="Kuroda H."/>
            <person name="Cui L."/>
            <person name="Yamamoto K."/>
            <person name="Hiramatsu K."/>
        </authorList>
    </citation>
    <scope>NUCLEOTIDE SEQUENCE [LARGE SCALE GENOMIC DNA]</scope>
    <source>
        <strain>MW2</strain>
    </source>
</reference>
<sequence length="326" mass="35897">MIEKSQACHDSLLDSVGQTPMVQLHQLFPKHEVFAKLEYMNPGGSMKDRPAKYIIEHGIKHGLITENTHLIESTSGNLGIALAMIAKIKGLKLTCVVDPKISPTNLKIIKSYGANVEMVEEPDAHGGYLMTRIAKVQELLATIDDAYWINQYANELNWQSHYHGAGTEIVETIKQPIDYFVAPVSTTGSIMGMSRKIKEVHPNAQIVAVDAKGSVIFGDKPINRELPGIGASRVPEILNRSEINQVIHVDDYQSALGCRKLIDYEGIFAGGSTGSIIAAIEQLITSIEEGATIVTILPDRGDRYLDLVYSDTWLEKMKSRQGVKSE</sequence>
<protein>
    <recommendedName>
        <fullName evidence="3">N-(2-amino-2-carboxyethyl)-L-glutamate synthase</fullName>
        <shortName evidence="3">ACEGA synthase</shortName>
        <ecNumber evidence="1">2.5.1.140</ecNumber>
    </recommendedName>
</protein>
<name>SBNA_STAAW</name>
<proteinExistence type="inferred from homology"/>